<proteinExistence type="evidence at transcript level"/>
<organism>
    <name type="scientific">Pseudomonas aeruginosa (strain UCBPP-PA14)</name>
    <dbReference type="NCBI Taxonomy" id="208963"/>
    <lineage>
        <taxon>Bacteria</taxon>
        <taxon>Pseudomonadati</taxon>
        <taxon>Pseudomonadota</taxon>
        <taxon>Gammaproteobacteria</taxon>
        <taxon>Pseudomonadales</taxon>
        <taxon>Pseudomonadaceae</taxon>
        <taxon>Pseudomonas</taxon>
    </lineage>
</organism>
<reference key="1">
    <citation type="journal article" date="2006" name="Genome Biol.">
        <title>Genomic analysis reveals that Pseudomonas aeruginosa virulence is combinatorial.</title>
        <authorList>
            <person name="Lee D.G."/>
            <person name="Urbach J.M."/>
            <person name="Wu G."/>
            <person name="Liberati N.T."/>
            <person name="Feinbaum R.L."/>
            <person name="Miyata S."/>
            <person name="Diggins L.T."/>
            <person name="He J."/>
            <person name="Saucier M."/>
            <person name="Deziel E."/>
            <person name="Friedman L."/>
            <person name="Li L."/>
            <person name="Grills G."/>
            <person name="Montgomery K."/>
            <person name="Kucherlapati R."/>
            <person name="Rahme L.G."/>
            <person name="Ausubel F.M."/>
        </authorList>
    </citation>
    <scope>NUCLEOTIDE SEQUENCE [LARGE SCALE GENOMIC DNA]</scope>
    <source>
        <strain>UCBPP-PA14</strain>
    </source>
</reference>
<reference key="2">
    <citation type="journal article" date="2017" name="Mol. Microbiol.">
        <title>Growth of Pseudomonas aeruginosa in zinc poor environments is promoted by a nicotianamine-related metallophore.</title>
        <authorList>
            <person name="Mastropasqua M.C."/>
            <person name="D'Orazio M."/>
            <person name="Cerasi M."/>
            <person name="Pacello F."/>
            <person name="Gismondi A."/>
            <person name="Canini A."/>
            <person name="Canuti L."/>
            <person name="Consalvo A."/>
            <person name="Ciavardelli D."/>
            <person name="Chirullo B."/>
            <person name="Pasquali P."/>
            <person name="Battistoni A."/>
        </authorList>
    </citation>
    <scope>FUNCTION</scope>
    <scope>INDUCTION</scope>
    <scope>DISRUPTION PHENOTYPE</scope>
    <source>
        <strain>UCBPP-PA14</strain>
    </source>
</reference>
<reference key="3">
    <citation type="journal article" date="2017" name="Sci. Rep.">
        <title>Pseudomonas aeruginosa zinc uptake in chelating environment is primarily mediated by the metallophore pseudopaline.</title>
        <authorList>
            <person name="Lhospice S."/>
            <person name="Gomez N.O."/>
            <person name="Ouerdane L."/>
            <person name="Brutesco C."/>
            <person name="Ghssein G."/>
            <person name="Hajjar C."/>
            <person name="Liratni A."/>
            <person name="Wang S."/>
            <person name="Richaud P."/>
            <person name="Bleves S."/>
            <person name="Ball G."/>
            <person name="Borezee-Durant E."/>
            <person name="Lobinski R."/>
            <person name="Pignol D."/>
            <person name="Arnoux P."/>
            <person name="Voulhoux R."/>
        </authorList>
    </citation>
    <scope>FUNCTION</scope>
    <scope>SUBCELLULAR LOCATION</scope>
    <scope>INDUCTION</scope>
    <scope>DISRUPTION PHENOTYPE</scope>
    <source>
        <strain>UCBPP-PA14</strain>
    </source>
</reference>
<evidence type="ECO:0000255" key="1"/>
<evidence type="ECO:0000255" key="2">
    <source>
        <dbReference type="PROSITE-ProRule" id="PRU01360"/>
    </source>
</evidence>
<evidence type="ECO:0000269" key="3">
    <source>
    </source>
</evidence>
<evidence type="ECO:0000269" key="4">
    <source>
    </source>
</evidence>
<evidence type="ECO:0000303" key="5">
    <source>
    </source>
</evidence>
<evidence type="ECO:0000303" key="6">
    <source>
    </source>
</evidence>
<evidence type="ECO:0000305" key="7"/>
<evidence type="ECO:0000305" key="8">
    <source>
    </source>
</evidence>
<evidence type="ECO:0000312" key="9">
    <source>
        <dbReference type="EMBL" id="ABJ14221.1"/>
    </source>
</evidence>
<sequence>MRVSVSLVLGVGLGCSSPALWAETESPAELEVLTVTAEAERAEGPVQGYRANRSASATRTDTRIEDIPQAISVVPRQVLDDLDSARIERALDFAGGVSRQNNFGGLTMFEYNVRGFTTSEFYRDGFSANRGYMNAPDSATIERVEILKGPASSLYGRGDPGGTVNLVTKKPQAERFARLHASAGSWDRYRSTLDLNTPLDEEGDLLYRMNLAVEDSKGFRDYADGQRLLVAPSFSWQLDPDTSLLVEAEVVRNRQVFDRGTVAPHNHLGSLPRSRFFGEPDDGKIDNNNETLQATLRHHLNEQWSLRLASHYKHGHLDGYASENSSLAADGYTLRREYRYRDFEWHDSITQLDLLGDLHTGSIRHQLLMGLEYERYHNDELILRSIPSRNPYAIDIRRPVYGQPKPPFGRDDRNHEEVDAMALNLQDQIEFNEKWRGLLGVRFDRYRQDMNATRLNNGRFRDTSSQQTQRAATPRIGVLYQATPEVGLFANASKSFKPNGGTDMAGKAFDPEEGRGYEAGVKLDLLDGRLGMTLAAFHLKKKNVLTADPSNPGYQQTAGEARSQGFDLQFSGQLTEQLRLIGAYAYIDAEVTKDENIARGSRLLNVPKHSGSLMGVYEFREGWLHGADAGAAVNYVGERAGDSSDSGFELPAYTTVDLLAHYPLASNATLGVNVNNLFDRRYYERSYNNVWVAPGEPRNLTMSLTLNY</sequence>
<dbReference type="EMBL" id="CP000438">
    <property type="protein sequence ID" value="ABJ14221.1"/>
    <property type="molecule type" value="Genomic_DNA"/>
</dbReference>
<dbReference type="RefSeq" id="WP_004365419.1">
    <property type="nucleotide sequence ID" value="NZ_CP034244.1"/>
</dbReference>
<dbReference type="SMR" id="A0A0H2ZI93"/>
<dbReference type="KEGG" id="pau:PA14_63960"/>
<dbReference type="HOGENOM" id="CLU_008287_9_4_6"/>
<dbReference type="BioCyc" id="PAER208963:G1G74-5407-MONOMER"/>
<dbReference type="Proteomes" id="UP000000653">
    <property type="component" value="Chromosome"/>
</dbReference>
<dbReference type="GO" id="GO:0009279">
    <property type="term" value="C:cell outer membrane"/>
    <property type="evidence" value="ECO:0007669"/>
    <property type="project" value="UniProtKB-SubCell"/>
</dbReference>
<dbReference type="GO" id="GO:0015344">
    <property type="term" value="F:siderophore uptake transmembrane transporter activity"/>
    <property type="evidence" value="ECO:0007669"/>
    <property type="project" value="TreeGrafter"/>
</dbReference>
<dbReference type="GO" id="GO:0038023">
    <property type="term" value="F:signaling receptor activity"/>
    <property type="evidence" value="ECO:0007669"/>
    <property type="project" value="InterPro"/>
</dbReference>
<dbReference type="GO" id="GO:0015675">
    <property type="term" value="P:nickel cation transport"/>
    <property type="evidence" value="ECO:0007669"/>
    <property type="project" value="UniProtKB-KW"/>
</dbReference>
<dbReference type="GO" id="GO:0006829">
    <property type="term" value="P:zinc ion transport"/>
    <property type="evidence" value="ECO:0007669"/>
    <property type="project" value="UniProtKB-KW"/>
</dbReference>
<dbReference type="CDD" id="cd01347">
    <property type="entry name" value="ligand_gated_channel"/>
    <property type="match status" value="1"/>
</dbReference>
<dbReference type="FunFam" id="2.170.130.10:FF:000001">
    <property type="entry name" value="Catecholate siderophore TonB-dependent receptor"/>
    <property type="match status" value="1"/>
</dbReference>
<dbReference type="FunFam" id="2.40.170.20:FF:000005">
    <property type="entry name" value="TonB-dependent siderophore receptor"/>
    <property type="match status" value="1"/>
</dbReference>
<dbReference type="Gene3D" id="2.40.170.20">
    <property type="entry name" value="TonB-dependent receptor, beta-barrel domain"/>
    <property type="match status" value="1"/>
</dbReference>
<dbReference type="Gene3D" id="2.170.130.10">
    <property type="entry name" value="TonB-dependent receptor, plug domain"/>
    <property type="match status" value="1"/>
</dbReference>
<dbReference type="InterPro" id="IPR012910">
    <property type="entry name" value="Plug_dom"/>
</dbReference>
<dbReference type="InterPro" id="IPR037066">
    <property type="entry name" value="Plug_dom_sf"/>
</dbReference>
<dbReference type="InterPro" id="IPR039426">
    <property type="entry name" value="TonB-dep_rcpt-like"/>
</dbReference>
<dbReference type="InterPro" id="IPR000531">
    <property type="entry name" value="TonB-dep_rcpt_b-brl"/>
</dbReference>
<dbReference type="InterPro" id="IPR036942">
    <property type="entry name" value="TonB_rcpt_b-brl_sf"/>
</dbReference>
<dbReference type="InterPro" id="IPR010105">
    <property type="entry name" value="TonB_sidphr_rcpt"/>
</dbReference>
<dbReference type="NCBIfam" id="TIGR01783">
    <property type="entry name" value="TonB-siderophor"/>
    <property type="match status" value="1"/>
</dbReference>
<dbReference type="PANTHER" id="PTHR32552">
    <property type="entry name" value="FERRICHROME IRON RECEPTOR-RELATED"/>
    <property type="match status" value="1"/>
</dbReference>
<dbReference type="PANTHER" id="PTHR32552:SF90">
    <property type="entry name" value="METAL-PSEUDOPALINE RECEPTOR CNTO"/>
    <property type="match status" value="1"/>
</dbReference>
<dbReference type="Pfam" id="PF07715">
    <property type="entry name" value="Plug"/>
    <property type="match status" value="1"/>
</dbReference>
<dbReference type="Pfam" id="PF00593">
    <property type="entry name" value="TonB_dep_Rec_b-barrel"/>
    <property type="match status" value="1"/>
</dbReference>
<dbReference type="SUPFAM" id="SSF56935">
    <property type="entry name" value="Porins"/>
    <property type="match status" value="1"/>
</dbReference>
<dbReference type="PROSITE" id="PS52016">
    <property type="entry name" value="TONB_DEPENDENT_REC_3"/>
    <property type="match status" value="1"/>
</dbReference>
<accession>A0A0H2ZI93</accession>
<name>CNTO_PSEAB</name>
<feature type="signal peptide" evidence="1">
    <location>
        <begin position="1"/>
        <end position="21"/>
    </location>
</feature>
<feature type="chain" id="PRO_5002603362" description="Metal-pseudopaline receptor CntO" evidence="1">
    <location>
        <begin position="22"/>
        <end position="708"/>
    </location>
</feature>
<feature type="domain" description="TBDR plug" evidence="2">
    <location>
        <begin position="63"/>
        <end position="169"/>
    </location>
</feature>
<feature type="domain" description="TBDR beta-barrel" evidence="2">
    <location>
        <begin position="174"/>
        <end position="708"/>
    </location>
</feature>
<comment type="function">
    <text evidence="3 4">Transports the metallophore pseudopaline, which is involved in the acquisition of nickel and zinc, and thus enables bacterial growth inside the host, where metal access is limited (PubMed:29214991). Is probably involved in the import of pseudopaline-metal complexes (PubMed:28898501, PubMed:29214991).</text>
</comment>
<comment type="subcellular location">
    <subcellularLocation>
        <location evidence="2 8">Cell outer membrane</location>
        <topology evidence="2">Multi-pass membrane protein</topology>
    </subcellularLocation>
</comment>
<comment type="induction">
    <text evidence="3 4">Is part of the operon cntOLMI that is negatively regulated by zinc level through the Zur repressor, which leads to transcriptional activation of this operon under zinc depletion.</text>
</comment>
<comment type="disruption phenotype">
    <text evidence="3 4">Deletion mutant does not show growth defect in LB medium, but it exhibits an evident growth defect after treatment with airway mucus secretions (AMS). Disruption of the gene alters the intracellular zinc content in VB-MM medium supplemented with zinc. Mutation severely affect the ability of P.aeruginosa to cause acute lung and systemic infections in C57BL/6 mice (PubMed:28898501). Mutant shows a small decrease in the extracellular content of pseudopaline and is partially impaired in nickel accumulation (PubMed:29214991).</text>
</comment>
<comment type="similarity">
    <text evidence="7">Belongs to the TonB-dependent receptor family.</text>
</comment>
<keyword id="KW-0998">Cell outer membrane</keyword>
<keyword id="KW-0406">Ion transport</keyword>
<keyword id="KW-0472">Membrane</keyword>
<keyword id="KW-0533">Nickel</keyword>
<keyword id="KW-0921">Nickel transport</keyword>
<keyword id="KW-0675">Receptor</keyword>
<keyword id="KW-0732">Signal</keyword>
<keyword id="KW-0798">TonB box</keyword>
<keyword id="KW-0812">Transmembrane</keyword>
<keyword id="KW-1134">Transmembrane beta strand</keyword>
<keyword id="KW-0813">Transport</keyword>
<keyword id="KW-0862">Zinc</keyword>
<keyword id="KW-0864">Zinc transport</keyword>
<gene>
    <name evidence="6" type="primary">cntO</name>
    <name evidence="5" type="synonym">zrmA</name>
    <name evidence="9" type="ordered locus">PA14_63960</name>
</gene>
<protein>
    <recommendedName>
        <fullName evidence="7">Metal-pseudopaline receptor CntO</fullName>
    </recommendedName>
</protein>